<evidence type="ECO:0000255" key="1">
    <source>
        <dbReference type="PROSITE-ProRule" id="PRU01348"/>
    </source>
</evidence>
<evidence type="ECO:0000256" key="2">
    <source>
        <dbReference type="SAM" id="MobiDB-lite"/>
    </source>
</evidence>
<evidence type="ECO:0000305" key="3"/>
<name>KASC1_HORVU</name>
<gene>
    <name type="primary">KAS12</name>
</gene>
<sequence length="462" mass="49016">MHAHAAHALGLRVPPPAFPRRRARPRRRPAAAVLATSAAPQRETDPRKRVVITGMGLASVFGSDVDTFYDRLLAGESGVGPIDRFDASSFPTRFAGQIRGFSSEGYIDGKNDRRLDDCIRYCILSGKKALESAGLGAGSDAHVKLDVGRAGVLVGTGMGGLSVFSDGVQNLIEKGYRKISPFFIPYAITNMGSALLAIDVGFMGPNYSISTACATSNYCFYAAANHIRRGEADIIVAGGTEAAIIPIGLGGFVACRALSQRNDDPITACRPWDKERDGFVMGEGAGVLVMESLEHAMKRDAPIIAEYLGGAVNCDAYHMTDPRADGLGVSSCITMSLRDAGVAPEEVNYINAHATSTLAGDLAEVRAIKQVFKNPSEIKINSTKSMIGHCLGAAGGLEAIATIKSITTGWVHPTINQFNPEPEVDFDTVANEKKQHEVNVGISNSFGFGGHNSVVVFAPFKP</sequence>
<keyword id="KW-0012">Acyltransferase</keyword>
<keyword id="KW-0150">Chloroplast</keyword>
<keyword id="KW-0903">Direct protein sequencing</keyword>
<keyword id="KW-0275">Fatty acid biosynthesis</keyword>
<keyword id="KW-0276">Fatty acid metabolism</keyword>
<keyword id="KW-0444">Lipid biosynthesis</keyword>
<keyword id="KW-0443">Lipid metabolism</keyword>
<keyword id="KW-0934">Plastid</keyword>
<keyword id="KW-0808">Transferase</keyword>
<keyword id="KW-0809">Transit peptide</keyword>
<organism>
    <name type="scientific">Hordeum vulgare</name>
    <name type="common">Barley</name>
    <dbReference type="NCBI Taxonomy" id="4513"/>
    <lineage>
        <taxon>Eukaryota</taxon>
        <taxon>Viridiplantae</taxon>
        <taxon>Streptophyta</taxon>
        <taxon>Embryophyta</taxon>
        <taxon>Tracheophyta</taxon>
        <taxon>Spermatophyta</taxon>
        <taxon>Magnoliopsida</taxon>
        <taxon>Liliopsida</taxon>
        <taxon>Poales</taxon>
        <taxon>Poaceae</taxon>
        <taxon>BOP clade</taxon>
        <taxon>Pooideae</taxon>
        <taxon>Triticodae</taxon>
        <taxon>Triticeae</taxon>
        <taxon>Hordeinae</taxon>
        <taxon>Hordeum</taxon>
    </lineage>
</organism>
<dbReference type="EC" id="2.3.1.41"/>
<dbReference type="EMBL" id="M60410">
    <property type="protein sequence ID" value="AAA32968.1"/>
    <property type="molecule type" value="mRNA"/>
</dbReference>
<dbReference type="PIR" id="A39356">
    <property type="entry name" value="A39356"/>
</dbReference>
<dbReference type="SMR" id="P23902"/>
<dbReference type="ExpressionAtlas" id="P23902">
    <property type="expression patterns" value="baseline and differential"/>
</dbReference>
<dbReference type="GO" id="GO:0009507">
    <property type="term" value="C:chloroplast"/>
    <property type="evidence" value="ECO:0007669"/>
    <property type="project" value="UniProtKB-SubCell"/>
</dbReference>
<dbReference type="GO" id="GO:0005739">
    <property type="term" value="C:mitochondrion"/>
    <property type="evidence" value="ECO:0007669"/>
    <property type="project" value="TreeGrafter"/>
</dbReference>
<dbReference type="GO" id="GO:0004315">
    <property type="term" value="F:3-oxoacyl-[acyl-carrier-protein] synthase activity"/>
    <property type="evidence" value="ECO:0007669"/>
    <property type="project" value="UniProtKB-EC"/>
</dbReference>
<dbReference type="GO" id="GO:0006633">
    <property type="term" value="P:fatty acid biosynthetic process"/>
    <property type="evidence" value="ECO:0007669"/>
    <property type="project" value="UniProtKB-KW"/>
</dbReference>
<dbReference type="CDD" id="cd00834">
    <property type="entry name" value="KAS_I_II"/>
    <property type="match status" value="1"/>
</dbReference>
<dbReference type="FunFam" id="3.40.47.10:FF:000027">
    <property type="entry name" value="3-oxoacyl-[acyl-carrier-protein] synthase 2"/>
    <property type="match status" value="1"/>
</dbReference>
<dbReference type="Gene3D" id="3.40.47.10">
    <property type="match status" value="1"/>
</dbReference>
<dbReference type="InterPro" id="IPR017568">
    <property type="entry name" value="3-oxoacyl-ACP_synth-2"/>
</dbReference>
<dbReference type="InterPro" id="IPR000794">
    <property type="entry name" value="Beta-ketoacyl_synthase"/>
</dbReference>
<dbReference type="InterPro" id="IPR018201">
    <property type="entry name" value="Ketoacyl_synth_AS"/>
</dbReference>
<dbReference type="InterPro" id="IPR014031">
    <property type="entry name" value="Ketoacyl_synth_C"/>
</dbReference>
<dbReference type="InterPro" id="IPR014030">
    <property type="entry name" value="Ketoacyl_synth_N"/>
</dbReference>
<dbReference type="InterPro" id="IPR020841">
    <property type="entry name" value="PKS_Beta-ketoAc_synthase_dom"/>
</dbReference>
<dbReference type="InterPro" id="IPR016039">
    <property type="entry name" value="Thiolase-like"/>
</dbReference>
<dbReference type="NCBIfam" id="TIGR03150">
    <property type="entry name" value="fabF"/>
    <property type="match status" value="1"/>
</dbReference>
<dbReference type="NCBIfam" id="NF004970">
    <property type="entry name" value="PRK06333.1"/>
    <property type="match status" value="1"/>
</dbReference>
<dbReference type="NCBIfam" id="NF005589">
    <property type="entry name" value="PRK07314.1"/>
    <property type="match status" value="1"/>
</dbReference>
<dbReference type="PANTHER" id="PTHR11712:SF328">
    <property type="entry name" value="3-OXOACYL-[ACYL-CARRIER-PROTEIN] SYNTHASE"/>
    <property type="match status" value="1"/>
</dbReference>
<dbReference type="PANTHER" id="PTHR11712">
    <property type="entry name" value="POLYKETIDE SYNTHASE-RELATED"/>
    <property type="match status" value="1"/>
</dbReference>
<dbReference type="Pfam" id="PF00109">
    <property type="entry name" value="ketoacyl-synt"/>
    <property type="match status" value="1"/>
</dbReference>
<dbReference type="Pfam" id="PF02801">
    <property type="entry name" value="Ketoacyl-synt_C"/>
    <property type="match status" value="1"/>
</dbReference>
<dbReference type="PIRSF" id="PIRSF000447">
    <property type="entry name" value="KAS_II"/>
    <property type="match status" value="1"/>
</dbReference>
<dbReference type="SMART" id="SM00825">
    <property type="entry name" value="PKS_KS"/>
    <property type="match status" value="1"/>
</dbReference>
<dbReference type="SUPFAM" id="SSF53901">
    <property type="entry name" value="Thiolase-like"/>
    <property type="match status" value="2"/>
</dbReference>
<dbReference type="PROSITE" id="PS00606">
    <property type="entry name" value="KS3_1"/>
    <property type="match status" value="1"/>
</dbReference>
<dbReference type="PROSITE" id="PS52004">
    <property type="entry name" value="KS3_2"/>
    <property type="match status" value="1"/>
</dbReference>
<reference key="1">
    <citation type="journal article" date="1991" name="Proc. Natl. Acad. Sci. U.S.A.">
        <title>Primary structure of a cerulenin-binding beta-ketoacyl-[acyl carrier protein] synthase from barley chloroplasts.</title>
        <authorList>
            <person name="Siggaard-Andersen M."/>
            <person name="Kauppinen S."/>
            <person name="von Wettstein-Knowles P."/>
        </authorList>
    </citation>
    <scope>NUCLEOTIDE SEQUENCE [MRNA]</scope>
    <scope>PARTIAL PROTEIN SEQUENCE</scope>
    <source>
        <strain>cv. Bonus</strain>
    </source>
</reference>
<protein>
    <recommendedName>
        <fullName>3-oxoacyl-[acyl-carrier-protein] synthase I, chloroplastic</fullName>
        <ecNumber>2.3.1.41</ecNumber>
    </recommendedName>
    <alternativeName>
        <fullName>Beta-ketoacyl-ACP synthase I</fullName>
        <shortName>KAS I</shortName>
    </alternativeName>
</protein>
<comment type="function">
    <text>Catalyzes the condensation reaction of fatty acid synthesis by the addition to an acyl acceptor of two carbons from malonyl-ACP. Specific for elongation from C-10 to unsaturated C-16 and C-18 fatty acids.</text>
</comment>
<comment type="catalytic activity">
    <reaction>
        <text>a fatty acyl-[ACP] + malonyl-[ACP] + H(+) = a 3-oxoacyl-[ACP] + holo-[ACP] + CO2</text>
        <dbReference type="Rhea" id="RHEA:22836"/>
        <dbReference type="Rhea" id="RHEA-COMP:9623"/>
        <dbReference type="Rhea" id="RHEA-COMP:9685"/>
        <dbReference type="Rhea" id="RHEA-COMP:9916"/>
        <dbReference type="Rhea" id="RHEA-COMP:14125"/>
        <dbReference type="ChEBI" id="CHEBI:15378"/>
        <dbReference type="ChEBI" id="CHEBI:16526"/>
        <dbReference type="ChEBI" id="CHEBI:64479"/>
        <dbReference type="ChEBI" id="CHEBI:78449"/>
        <dbReference type="ChEBI" id="CHEBI:78776"/>
        <dbReference type="ChEBI" id="CHEBI:138651"/>
        <dbReference type="EC" id="2.3.1.41"/>
    </reaction>
</comment>
<comment type="subunit">
    <text>Homodimer.</text>
</comment>
<comment type="subcellular location">
    <subcellularLocation>
        <location>Plastid</location>
        <location>Chloroplast</location>
    </subcellularLocation>
</comment>
<comment type="similarity">
    <text evidence="3">Belongs to the thiolase-like superfamily. Beta-ketoacyl-ACP synthases family.</text>
</comment>
<accession>P23902</accession>
<feature type="transit peptide" description="Chloroplast">
    <location>
        <begin position="1"/>
        <end position="35"/>
    </location>
</feature>
<feature type="chain" id="PRO_0000000587" description="3-oxoacyl-[acyl-carrier-protein] synthase I, chloroplastic">
    <location>
        <begin position="36"/>
        <end position="462"/>
    </location>
</feature>
<feature type="domain" description="Ketosynthase family 3 (KS3)" evidence="1">
    <location>
        <begin position="47"/>
        <end position="459"/>
    </location>
</feature>
<feature type="region of interest" description="Disordered" evidence="2">
    <location>
        <begin position="1"/>
        <end position="45"/>
    </location>
</feature>
<feature type="compositionally biased region" description="Basic residues" evidence="2">
    <location>
        <begin position="19"/>
        <end position="29"/>
    </location>
</feature>
<feature type="compositionally biased region" description="Low complexity" evidence="2">
    <location>
        <begin position="30"/>
        <end position="39"/>
    </location>
</feature>
<feature type="active site" description="For beta-ketoacyl synthase activity" evidence="1">
    <location>
        <position position="213"/>
    </location>
</feature>
<feature type="active site" description="For beta-ketoacyl synthase activity" evidence="1">
    <location>
        <position position="353"/>
    </location>
</feature>
<feature type="active site" description="For beta-ketoacyl synthase activity" evidence="1">
    <location>
        <position position="389"/>
    </location>
</feature>
<proteinExistence type="evidence at protein level"/>